<evidence type="ECO:0000250" key="1">
    <source>
        <dbReference type="UniProtKB" id="O08709"/>
    </source>
</evidence>
<evidence type="ECO:0000250" key="2">
    <source>
        <dbReference type="UniProtKB" id="O35244"/>
    </source>
</evidence>
<evidence type="ECO:0000250" key="3">
    <source>
        <dbReference type="UniProtKB" id="O77834"/>
    </source>
</evidence>
<evidence type="ECO:0000250" key="4">
    <source>
        <dbReference type="UniProtKB" id="P30041"/>
    </source>
</evidence>
<evidence type="ECO:0000255" key="5">
    <source>
        <dbReference type="PROSITE-ProRule" id="PRU00691"/>
    </source>
</evidence>
<evidence type="ECO:0000305" key="6"/>
<keyword id="KW-0007">Acetylation</keyword>
<keyword id="KW-0049">Antioxidant</keyword>
<keyword id="KW-0963">Cytoplasm</keyword>
<keyword id="KW-0378">Hydrolase</keyword>
<keyword id="KW-0442">Lipid degradation</keyword>
<keyword id="KW-0443">Lipid metabolism</keyword>
<keyword id="KW-0458">Lysosome</keyword>
<keyword id="KW-0511">Multifunctional enzyme</keyword>
<keyword id="KW-0560">Oxidoreductase</keyword>
<keyword id="KW-0575">Peroxidase</keyword>
<keyword id="KW-0597">Phosphoprotein</keyword>
<keyword id="KW-0676">Redox-active center</keyword>
<keyword id="KW-1185">Reference proteome</keyword>
<keyword id="KW-0808">Transferase</keyword>
<gene>
    <name type="primary">PRDX6</name>
</gene>
<feature type="chain" id="PRO_0000256861" description="Peroxiredoxin-6">
    <location>
        <begin position="1"/>
        <end position="224"/>
    </location>
</feature>
<feature type="domain" description="Thioredoxin" evidence="5">
    <location>
        <begin position="5"/>
        <end position="169"/>
    </location>
</feature>
<feature type="region of interest" description="Required and sufficient for targeting to lysosomes and lamellar bodies" evidence="2">
    <location>
        <begin position="31"/>
        <end position="40"/>
    </location>
</feature>
<feature type="active site" description="Cysteine sulfenic acid (-SOH) intermediate; for peroxidase activity" evidence="4">
    <location>
        <position position="47"/>
    </location>
</feature>
<feature type="active site" description="For phospholipase activity" evidence="2">
    <location>
        <position position="140"/>
    </location>
</feature>
<feature type="site" description="Important for phospholipase activity" evidence="2">
    <location>
        <position position="32"/>
    </location>
</feature>
<feature type="modified residue" description="Phosphothreonine" evidence="4">
    <location>
        <position position="44"/>
    </location>
</feature>
<feature type="modified residue" description="N6-acetyllysine" evidence="4">
    <location>
        <position position="63"/>
    </location>
</feature>
<feature type="modified residue" description="Phosphotyrosine" evidence="4">
    <location>
        <position position="89"/>
    </location>
</feature>
<feature type="modified residue" description="Phosphothreonine; by MAPK" evidence="2">
    <location>
        <position position="177"/>
    </location>
</feature>
<feature type="modified residue" description="N6-acetyllysine; alternate" evidence="4">
    <location>
        <position position="209"/>
    </location>
</feature>
<feature type="modified residue" description="N6-succinyllysine; alternate" evidence="1">
    <location>
        <position position="209"/>
    </location>
</feature>
<proteinExistence type="evidence at transcript level"/>
<sequence>MPGGLLLGDEAPNFEANTTIGRIRFHDFLGDSWGILFSHPRDFTPVCTTELGRAAKLAPEFAKRNVKMIALSIDSVEDHLAWSKDINAYNGEEPKETLPFPIIDDKSRDLAIQLGMLDPAEKDEQGMPVTARVVFIFGPDKKLKLSILYPATTGRNFDEILRVIISLQLTAEKRVATPVDWKNGDSVMVLPNIPEEEAKKLFPKGVFTKELPSGKKYLRYTPQP</sequence>
<accession>Q9TSX9</accession>
<protein>
    <recommendedName>
        <fullName>Peroxiredoxin-6</fullName>
        <ecNumber evidence="4">1.11.1.27</ecNumber>
    </recommendedName>
    <alternativeName>
        <fullName>1-Cys peroxiredoxin</fullName>
        <shortName>1-Cys PRX</shortName>
    </alternativeName>
    <alternativeName>
        <fullName>Acidic calcium-independent phospholipase A2</fullName>
        <shortName>aiPLA2</shortName>
        <ecNumber>3.1.1.4</ecNumber>
    </alternativeName>
    <alternativeName>
        <fullName evidence="6">Glutathione-dependent peroxiredoxin</fullName>
    </alternativeName>
    <alternativeName>
        <fullName evidence="4">Lysophosphatidylcholine acyltransferase 5</fullName>
        <shortName>LPC acyltransferase 5</shortName>
        <shortName>LPCAT-5</shortName>
        <shortName>Lyso-PC acyltransferase 5</shortName>
        <ecNumber evidence="4">2.3.1.23</ecNumber>
    </alternativeName>
    <alternativeName>
        <fullName>Non-selenium glutathione peroxidase</fullName>
        <shortName>NSGPx</shortName>
    </alternativeName>
</protein>
<reference key="1">
    <citation type="submission" date="1999-07" db="EMBL/GenBank/DDBJ databases">
        <title>Glutathione peroxidase in the bovine oviduct.</title>
        <authorList>
            <person name="Rojas Garcia P.P."/>
            <person name="Einspanier R."/>
        </authorList>
    </citation>
    <scope>NUCLEOTIDE SEQUENCE [MRNA]</scope>
    <source>
        <tissue>Oviduct</tissue>
    </source>
</reference>
<comment type="function">
    <text evidence="4">Thiol-specific peroxidase that catalyzes the reduction of hydrogen peroxide and organic hydroperoxides to water and alcohols, respectively (By similarity). Can reduce H(2)O(2) and short chain organic, fatty acid, and phospholipid hydroperoxides (By similarity). Also has phospholipase activity, and can therefore either reduce the oxidized sn-2 fatty acyl group of phospholipids (peroxidase activity) or hydrolyze the sn-2 ester bond of phospholipids (phospholipase activity) (By similarity). These activities are dependent on binding to phospholipids at acidic pH and to oxidized phospholipds at cytosolic pH (By similarity). Plays a role in cell protection against oxidative stress by detoxifying peroxides and in phospholipid homeostasis (By similarity). Exhibits acyl-CoA-dependent lysophospholipid acyltransferase which mediates the conversion of lysophosphatidylcholine (1-acyl-sn-glycero-3-phosphocholine or LPC) into phosphatidylcholine (1,2-diacyl-sn-glycero-3-phosphocholine or PC) (By similarity). Shows a clear preference for LPC as the lysophospholipid and for palmitoyl CoA as the fatty acyl substrate (By similarity).</text>
</comment>
<comment type="catalytic activity">
    <reaction evidence="4">
        <text>a hydroperoxide + 2 glutathione = an alcohol + glutathione disulfide + H2O</text>
        <dbReference type="Rhea" id="RHEA:62632"/>
        <dbReference type="ChEBI" id="CHEBI:15377"/>
        <dbReference type="ChEBI" id="CHEBI:30879"/>
        <dbReference type="ChEBI" id="CHEBI:35924"/>
        <dbReference type="ChEBI" id="CHEBI:57925"/>
        <dbReference type="ChEBI" id="CHEBI:58297"/>
        <dbReference type="EC" id="1.11.1.27"/>
    </reaction>
</comment>
<comment type="catalytic activity">
    <reaction evidence="4">
        <text>a 1,2-diacyl-sn-glycero-3-phosphocholine + H2O = a 1-acyl-sn-glycero-3-phosphocholine + a fatty acid + H(+)</text>
        <dbReference type="Rhea" id="RHEA:15801"/>
        <dbReference type="ChEBI" id="CHEBI:15377"/>
        <dbReference type="ChEBI" id="CHEBI:15378"/>
        <dbReference type="ChEBI" id="CHEBI:28868"/>
        <dbReference type="ChEBI" id="CHEBI:57643"/>
        <dbReference type="ChEBI" id="CHEBI:58168"/>
        <dbReference type="EC" id="3.1.1.4"/>
    </reaction>
</comment>
<comment type="catalytic activity">
    <reaction evidence="4">
        <text>a 1-acyl-sn-glycero-3-phosphocholine + an acyl-CoA = a 1,2-diacyl-sn-glycero-3-phosphocholine + CoA</text>
        <dbReference type="Rhea" id="RHEA:12937"/>
        <dbReference type="ChEBI" id="CHEBI:57287"/>
        <dbReference type="ChEBI" id="CHEBI:57643"/>
        <dbReference type="ChEBI" id="CHEBI:58168"/>
        <dbReference type="ChEBI" id="CHEBI:58342"/>
        <dbReference type="EC" id="2.3.1.23"/>
    </reaction>
</comment>
<comment type="catalytic activity">
    <reaction evidence="4">
        <text>1-hexadecanoyl-sn-glycero-3-phosphocholine + hexadecanoyl-CoA = 1,2-dihexadecanoyl-sn-glycero-3-phosphocholine + CoA</text>
        <dbReference type="Rhea" id="RHEA:35983"/>
        <dbReference type="ChEBI" id="CHEBI:57287"/>
        <dbReference type="ChEBI" id="CHEBI:57379"/>
        <dbReference type="ChEBI" id="CHEBI:72998"/>
        <dbReference type="ChEBI" id="CHEBI:72999"/>
    </reaction>
    <physiologicalReaction direction="left-to-right" evidence="4">
        <dbReference type="Rhea" id="RHEA:35984"/>
    </physiologicalReaction>
</comment>
<comment type="catalytic activity">
    <reaction evidence="4">
        <text>1,2-dihexadecanoyl-sn-glycero-3-phosphocholine + H2O = 1-hexadecanoyl-sn-glycero-3-phosphocholine + hexadecanoate + H(+)</text>
        <dbReference type="Rhea" id="RHEA:41223"/>
        <dbReference type="ChEBI" id="CHEBI:7896"/>
        <dbReference type="ChEBI" id="CHEBI:15377"/>
        <dbReference type="ChEBI" id="CHEBI:15378"/>
        <dbReference type="ChEBI" id="CHEBI:72998"/>
        <dbReference type="ChEBI" id="CHEBI:72999"/>
    </reaction>
    <physiologicalReaction direction="left-to-right" evidence="4">
        <dbReference type="Rhea" id="RHEA:41224"/>
    </physiologicalReaction>
</comment>
<comment type="subunit">
    <text evidence="1 3 4">Homodimer (By similarity). Interacts with GSTP1; mediates PRDX6 glutathionylation and regeneration (By similarity). Interacts with APEX1. Interacts with STH. May interact with FAM168B (By similarity). May interact with HTR2A (By similarity).</text>
</comment>
<comment type="subcellular location">
    <subcellularLocation>
        <location evidence="2">Cytoplasm</location>
    </subcellularLocation>
    <subcellularLocation>
        <location evidence="2">Lysosome</location>
    </subcellularLocation>
    <text evidence="2">Also found in lung secretory organelles (lamellar bodies).</text>
</comment>
<comment type="PTM">
    <text evidence="4">Irreversibly inactivated by overoxidation of Cys-47 to sulfinic acid (Cys-SO(2)H) and sulfonic acid (Cys-SO(3)H) forms upon oxidative stress.</text>
</comment>
<comment type="PTM">
    <text evidence="2">Phosphorylation at Thr-177 by MAP kinases increases the phospholipase activity of the enzyme (By similarity). The phosphorylated form exhibits a greater lysophosphatidylcholine acyltransferase activity compared to the non-phosphorylated form (By similarity).</text>
</comment>
<comment type="miscellaneous">
    <text evidence="2">The active site is a conserved redox-active cysteine residue, the peroxidatic cysteine (C(P)), which makes the nucleophilic attack on the peroxide substrate. The peroxide oxidizes the C(P)-SH to cysteine sulfenic acid (C(P)-SOH), which then reacts with another cysteine residue, the resolving cysteine (C(R)), to form a disulfide bridge. The disulfide is subsequently reduced by an appropriate electron donor to complete the catalytic cycle. In this 1-Cys peroxiredoxin, no C(R) is present and C(P) instead forms a disulfide with a cysteine from another protein or with a small thiol molecule. C(P) is reactivated by glutathionylation mediated by glutathione S-transferase Pi, followed by spontaneous reduction of the enzyme with glutathione.</text>
</comment>
<comment type="similarity">
    <text evidence="6">Belongs to the peroxiredoxin family. Prx6 subfamily.</text>
</comment>
<organism>
    <name type="scientific">Sus scrofa</name>
    <name type="common">Pig</name>
    <dbReference type="NCBI Taxonomy" id="9823"/>
    <lineage>
        <taxon>Eukaryota</taxon>
        <taxon>Metazoa</taxon>
        <taxon>Chordata</taxon>
        <taxon>Craniata</taxon>
        <taxon>Vertebrata</taxon>
        <taxon>Euteleostomi</taxon>
        <taxon>Mammalia</taxon>
        <taxon>Eutheria</taxon>
        <taxon>Laurasiatheria</taxon>
        <taxon>Artiodactyla</taxon>
        <taxon>Suina</taxon>
        <taxon>Suidae</taxon>
        <taxon>Sus</taxon>
    </lineage>
</organism>
<name>PRDX6_PIG</name>
<dbReference type="EC" id="1.11.1.27" evidence="4"/>
<dbReference type="EC" id="3.1.1.4"/>
<dbReference type="EC" id="2.3.1.23" evidence="4"/>
<dbReference type="EMBL" id="AJ243849">
    <property type="protein sequence ID" value="CAB65456.1"/>
    <property type="molecule type" value="mRNA"/>
</dbReference>
<dbReference type="RefSeq" id="NP_999573.1">
    <property type="nucleotide sequence ID" value="NM_214408.1"/>
</dbReference>
<dbReference type="SMR" id="Q9TSX9"/>
<dbReference type="FunCoup" id="Q9TSX9">
    <property type="interactions" value="665"/>
</dbReference>
<dbReference type="STRING" id="9823.ENSSSCP00000053767"/>
<dbReference type="PeroxiBase" id="4534">
    <property type="entry name" value="Ssc1CysPrx"/>
</dbReference>
<dbReference type="PaxDb" id="9823-ENSSSCP00000026977"/>
<dbReference type="PeptideAtlas" id="Q9TSX9"/>
<dbReference type="Ensembl" id="ENSSSCT00000045929.2">
    <property type="protein sequence ID" value="ENSSSCP00000053767.1"/>
    <property type="gene ID" value="ENSSSCG00000022742.3"/>
</dbReference>
<dbReference type="Ensembl" id="ENSSSCT00015109674.1">
    <property type="protein sequence ID" value="ENSSSCP00015046682.1"/>
    <property type="gene ID" value="ENSSSCG00015080621.1"/>
</dbReference>
<dbReference type="Ensembl" id="ENSSSCT00025076315.1">
    <property type="protein sequence ID" value="ENSSSCP00025033078.1"/>
    <property type="gene ID" value="ENSSSCG00025055749.1"/>
</dbReference>
<dbReference type="Ensembl" id="ENSSSCT00035057751.1">
    <property type="protein sequence ID" value="ENSSSCP00035023198.1"/>
    <property type="gene ID" value="ENSSSCG00035043474.1"/>
</dbReference>
<dbReference type="Ensembl" id="ENSSSCT00040090342.1">
    <property type="protein sequence ID" value="ENSSSCP00040039703.1"/>
    <property type="gene ID" value="ENSSSCG00040066164.1"/>
</dbReference>
<dbReference type="Ensembl" id="ENSSSCT00045031261.1">
    <property type="protein sequence ID" value="ENSSSCP00045021665.1"/>
    <property type="gene ID" value="ENSSSCG00045018365.1"/>
</dbReference>
<dbReference type="Ensembl" id="ENSSSCT00050020177.1">
    <property type="protein sequence ID" value="ENSSSCP00050008401.1"/>
    <property type="gene ID" value="ENSSSCG00050014915.1"/>
</dbReference>
<dbReference type="Ensembl" id="ENSSSCT00055030407.1">
    <property type="protein sequence ID" value="ENSSSCP00055024209.1"/>
    <property type="gene ID" value="ENSSSCG00055015446.1"/>
</dbReference>
<dbReference type="Ensembl" id="ENSSSCT00060049634.1">
    <property type="protein sequence ID" value="ENSSSCP00060021241.1"/>
    <property type="gene ID" value="ENSSSCG00060036630.1"/>
</dbReference>
<dbReference type="Ensembl" id="ENSSSCT00065008707.1">
    <property type="protein sequence ID" value="ENSSSCP00065003678.1"/>
    <property type="gene ID" value="ENSSSCG00065006462.1"/>
</dbReference>
<dbReference type="Ensembl" id="ENSSSCT00070033152.1">
    <property type="protein sequence ID" value="ENSSSCP00070027687.1"/>
    <property type="gene ID" value="ENSSSCG00070016829.1"/>
</dbReference>
<dbReference type="Ensembl" id="ENSSSCT00090045085">
    <property type="protein sequence ID" value="ENSSSCP00090027880"/>
    <property type="gene ID" value="ENSSSCG00090025548"/>
</dbReference>
<dbReference type="Ensembl" id="ENSSSCT00105049254">
    <property type="protein sequence ID" value="ENSSSCP00105034710"/>
    <property type="gene ID" value="ENSSSCG00105025924"/>
</dbReference>
<dbReference type="Ensembl" id="ENSSSCT00110012915">
    <property type="protein sequence ID" value="ENSSSCP00110009097"/>
    <property type="gene ID" value="ENSSSCG00110006589"/>
</dbReference>
<dbReference type="Ensembl" id="ENSSSCT00115005984">
    <property type="protein sequence ID" value="ENSSSCP00115005577"/>
    <property type="gene ID" value="ENSSSCG00115003536"/>
</dbReference>
<dbReference type="Ensembl" id="ENSSSCT00130014883">
    <property type="protein sequence ID" value="ENSSSCP00130010049"/>
    <property type="gene ID" value="ENSSSCG00130008067"/>
</dbReference>
<dbReference type="GeneID" id="399538"/>
<dbReference type="KEGG" id="ssc:399538"/>
<dbReference type="CTD" id="9588"/>
<dbReference type="VGNC" id="VGNC:91785">
    <property type="gene designation" value="PRDX6"/>
</dbReference>
<dbReference type="eggNOG" id="KOG0854">
    <property type="taxonomic scope" value="Eukaryota"/>
</dbReference>
<dbReference type="GeneTree" id="ENSGT00550000074794"/>
<dbReference type="HOGENOM" id="CLU_042529_4_1_1"/>
<dbReference type="InParanoid" id="Q9TSX9"/>
<dbReference type="OMA" id="RLTMLYP"/>
<dbReference type="OrthoDB" id="2996783at2759"/>
<dbReference type="TreeFam" id="TF105183"/>
<dbReference type="BRENDA" id="1.11.1.27">
    <property type="organism ID" value="6170"/>
</dbReference>
<dbReference type="Reactome" id="R-SSC-3299685">
    <property type="pathway name" value="Detoxification of Reactive Oxygen Species"/>
</dbReference>
<dbReference type="Reactome" id="R-SSC-6798695">
    <property type="pathway name" value="Neutrophil degranulation"/>
</dbReference>
<dbReference type="ChiTaRS" id="PRDX6">
    <property type="organism name" value="pig"/>
</dbReference>
<dbReference type="Proteomes" id="UP000008227">
    <property type="component" value="Chromosome 9"/>
</dbReference>
<dbReference type="Proteomes" id="UP000314985">
    <property type="component" value="Chromosome 9"/>
</dbReference>
<dbReference type="Proteomes" id="UP000694570">
    <property type="component" value="Unplaced"/>
</dbReference>
<dbReference type="Proteomes" id="UP000694571">
    <property type="component" value="Unplaced"/>
</dbReference>
<dbReference type="Proteomes" id="UP000694720">
    <property type="component" value="Unplaced"/>
</dbReference>
<dbReference type="Proteomes" id="UP000694722">
    <property type="component" value="Unplaced"/>
</dbReference>
<dbReference type="Proteomes" id="UP000694723">
    <property type="component" value="Unplaced"/>
</dbReference>
<dbReference type="Proteomes" id="UP000694724">
    <property type="component" value="Unplaced"/>
</dbReference>
<dbReference type="Proteomes" id="UP000694725">
    <property type="component" value="Unplaced"/>
</dbReference>
<dbReference type="Proteomes" id="UP000694726">
    <property type="component" value="Unplaced"/>
</dbReference>
<dbReference type="Proteomes" id="UP000694727">
    <property type="component" value="Unplaced"/>
</dbReference>
<dbReference type="Proteomes" id="UP000694728">
    <property type="component" value="Unplaced"/>
</dbReference>
<dbReference type="Bgee" id="ENSSSCG00000022742">
    <property type="expression patterns" value="Expressed in caecum and 46 other cell types or tissues"/>
</dbReference>
<dbReference type="GO" id="GO:0005737">
    <property type="term" value="C:cytoplasm"/>
    <property type="evidence" value="ECO:0000250"/>
    <property type="project" value="UniProtKB"/>
</dbReference>
<dbReference type="GO" id="GO:0005829">
    <property type="term" value="C:cytosol"/>
    <property type="evidence" value="ECO:0000318"/>
    <property type="project" value="GO_Central"/>
</dbReference>
<dbReference type="GO" id="GO:0005764">
    <property type="term" value="C:lysosome"/>
    <property type="evidence" value="ECO:0007669"/>
    <property type="project" value="UniProtKB-SubCell"/>
</dbReference>
<dbReference type="GO" id="GO:0005634">
    <property type="term" value="C:nucleus"/>
    <property type="evidence" value="ECO:0007669"/>
    <property type="project" value="Ensembl"/>
</dbReference>
<dbReference type="GO" id="GO:0048471">
    <property type="term" value="C:perinuclear region of cytoplasm"/>
    <property type="evidence" value="ECO:0007669"/>
    <property type="project" value="Ensembl"/>
</dbReference>
<dbReference type="GO" id="GO:0047184">
    <property type="term" value="F:1-acylglycerophosphocholine O-acyltransferase activity"/>
    <property type="evidence" value="ECO:0000250"/>
    <property type="project" value="UniProtKB"/>
</dbReference>
<dbReference type="GO" id="GO:0047499">
    <property type="term" value="F:calcium-independent phospholipase A2 activity"/>
    <property type="evidence" value="ECO:0007669"/>
    <property type="project" value="Ensembl"/>
</dbReference>
<dbReference type="GO" id="GO:0004602">
    <property type="term" value="F:glutathione peroxidase activity"/>
    <property type="evidence" value="ECO:0007669"/>
    <property type="project" value="Ensembl"/>
</dbReference>
<dbReference type="GO" id="GO:0042802">
    <property type="term" value="F:identical protein binding"/>
    <property type="evidence" value="ECO:0007669"/>
    <property type="project" value="Ensembl"/>
</dbReference>
<dbReference type="GO" id="GO:0004601">
    <property type="term" value="F:peroxidase activity"/>
    <property type="evidence" value="ECO:0000318"/>
    <property type="project" value="GO_Central"/>
</dbReference>
<dbReference type="GO" id="GO:0051920">
    <property type="term" value="F:peroxiredoxin activity"/>
    <property type="evidence" value="ECO:0007669"/>
    <property type="project" value="InterPro"/>
</dbReference>
<dbReference type="GO" id="GO:0004623">
    <property type="term" value="F:phospholipase A2 activity"/>
    <property type="evidence" value="ECO:0000250"/>
    <property type="project" value="UniProtKB"/>
</dbReference>
<dbReference type="GO" id="GO:0031625">
    <property type="term" value="F:ubiquitin protein ligase binding"/>
    <property type="evidence" value="ECO:0007669"/>
    <property type="project" value="Ensembl"/>
</dbReference>
<dbReference type="GO" id="GO:0045454">
    <property type="term" value="P:cell redox homeostasis"/>
    <property type="evidence" value="ECO:0000318"/>
    <property type="project" value="GO_Central"/>
</dbReference>
<dbReference type="GO" id="GO:0046475">
    <property type="term" value="P:glycerophospholipid catabolic process"/>
    <property type="evidence" value="ECO:0007669"/>
    <property type="project" value="Ensembl"/>
</dbReference>
<dbReference type="GO" id="GO:0048026">
    <property type="term" value="P:positive regulation of mRNA splicing, via spliceosome"/>
    <property type="evidence" value="ECO:0007669"/>
    <property type="project" value="Ensembl"/>
</dbReference>
<dbReference type="GO" id="GO:0006979">
    <property type="term" value="P:response to oxidative stress"/>
    <property type="evidence" value="ECO:0007669"/>
    <property type="project" value="Ensembl"/>
</dbReference>
<dbReference type="CDD" id="cd03016">
    <property type="entry name" value="PRX_1cys"/>
    <property type="match status" value="1"/>
</dbReference>
<dbReference type="FunFam" id="3.30.1020.10:FF:000001">
    <property type="entry name" value="1-Cys peroxiredoxin"/>
    <property type="match status" value="1"/>
</dbReference>
<dbReference type="FunFam" id="3.40.30.10:FF:000011">
    <property type="entry name" value="Peroxiredoxin PRX1"/>
    <property type="match status" value="1"/>
</dbReference>
<dbReference type="Gene3D" id="3.30.1020.10">
    <property type="entry name" value="Antioxidant, Horf6, Chain A, domain2"/>
    <property type="match status" value="1"/>
</dbReference>
<dbReference type="Gene3D" id="3.40.30.10">
    <property type="entry name" value="Glutaredoxin"/>
    <property type="match status" value="1"/>
</dbReference>
<dbReference type="InterPro" id="IPR000866">
    <property type="entry name" value="AhpC/TSA"/>
</dbReference>
<dbReference type="InterPro" id="IPR024706">
    <property type="entry name" value="Peroxiredoxin_AhpC-typ"/>
</dbReference>
<dbReference type="InterPro" id="IPR019479">
    <property type="entry name" value="Peroxiredoxin_C"/>
</dbReference>
<dbReference type="InterPro" id="IPR045020">
    <property type="entry name" value="PRX_1cys"/>
</dbReference>
<dbReference type="InterPro" id="IPR036249">
    <property type="entry name" value="Thioredoxin-like_sf"/>
</dbReference>
<dbReference type="InterPro" id="IPR013766">
    <property type="entry name" value="Thioredoxin_domain"/>
</dbReference>
<dbReference type="PANTHER" id="PTHR43503">
    <property type="entry name" value="MCG48959-RELATED"/>
    <property type="match status" value="1"/>
</dbReference>
<dbReference type="PANTHER" id="PTHR43503:SF4">
    <property type="entry name" value="PEROXIREDOXIN-6"/>
    <property type="match status" value="1"/>
</dbReference>
<dbReference type="Pfam" id="PF10417">
    <property type="entry name" value="1-cysPrx_C"/>
    <property type="match status" value="1"/>
</dbReference>
<dbReference type="Pfam" id="PF00578">
    <property type="entry name" value="AhpC-TSA"/>
    <property type="match status" value="1"/>
</dbReference>
<dbReference type="PIRSF" id="PIRSF000239">
    <property type="entry name" value="AHPC"/>
    <property type="match status" value="1"/>
</dbReference>
<dbReference type="SUPFAM" id="SSF52833">
    <property type="entry name" value="Thioredoxin-like"/>
    <property type="match status" value="1"/>
</dbReference>
<dbReference type="PROSITE" id="PS51352">
    <property type="entry name" value="THIOREDOXIN_2"/>
    <property type="match status" value="1"/>
</dbReference>